<protein>
    <recommendedName>
        <fullName>Uncharacterized 12.2 kDa protein in 16S rRNA region</fullName>
    </recommendedName>
</protein>
<comment type="subcellular location">
    <subcellularLocation>
        <location>Plastid</location>
        <location>Chloroplast</location>
    </subcellularLocation>
</comment>
<reference key="1">
    <citation type="journal article" date="1985" name="Nucleic Acids Res.">
        <title>Sequence organization of repetitive elements in the flanking regions of the chloroplast ribosomal unit of Chlamydomonas reinhardii.</title>
        <authorList>
            <person name="Schneider M."/>
            <person name="Darlix J.-L."/>
            <person name="Erickson J."/>
            <person name="Rochaix J.-D."/>
        </authorList>
    </citation>
    <scope>NUCLEOTIDE SEQUENCE [GENOMIC DNA]</scope>
</reference>
<reference key="2">
    <citation type="journal article" date="2009" name="BMC Evol. Biol.">
        <title>Nucleotide diversity of the Chlamydomonas reinhardtii plastid genome: addressing the mutational-hazard hypothesis.</title>
        <authorList>
            <person name="Smith D.R."/>
            <person name="Lee R.W."/>
        </authorList>
    </citation>
    <scope>NUCLEOTIDE SEQUENCE [LARGE SCALE GENOMIC DNA]</scope>
    <source>
        <strain>CC-503</strain>
    </source>
</reference>
<reference key="3">
    <citation type="journal article" date="2002" name="Plant Cell">
        <title>The Chlamydomonas reinhardtii plastid chromosome: islands of genes in a sea of repeats.</title>
        <authorList>
            <person name="Maul J.E."/>
            <person name="Lilly J.W."/>
            <person name="Cui L."/>
            <person name="dePamphilis C.W."/>
            <person name="Miller W."/>
            <person name="Harris E.H."/>
            <person name="Stern D.B."/>
        </authorList>
    </citation>
    <scope>IDENTIFICATION</scope>
    <scope>COMPLETE PLASTID GENOME</scope>
</reference>
<name>YCX1_CHLRE</name>
<proteinExistence type="predicted"/>
<evidence type="ECO:0000256" key="1">
    <source>
        <dbReference type="SAM" id="MobiDB-lite"/>
    </source>
</evidence>
<organism>
    <name type="scientific">Chlamydomonas reinhardtii</name>
    <name type="common">Chlamydomonas smithii</name>
    <dbReference type="NCBI Taxonomy" id="3055"/>
    <lineage>
        <taxon>Eukaryota</taxon>
        <taxon>Viridiplantae</taxon>
        <taxon>Chlorophyta</taxon>
        <taxon>core chlorophytes</taxon>
        <taxon>Chlorophyceae</taxon>
        <taxon>CS clade</taxon>
        <taxon>Chlamydomonadales</taxon>
        <taxon>Chlamydomonadaceae</taxon>
        <taxon>Chlamydomonas</taxon>
    </lineage>
</organism>
<keyword id="KW-0150">Chloroplast</keyword>
<keyword id="KW-0934">Plastid</keyword>
<keyword id="KW-1185">Reference proteome</keyword>
<dbReference type="EMBL" id="X03269">
    <property type="protein sequence ID" value="CAA27022.1"/>
    <property type="molecule type" value="Genomic_DNA"/>
</dbReference>
<dbReference type="EMBL" id="FJ423446">
    <property type="status" value="NOT_ANNOTATED_CDS"/>
    <property type="molecule type" value="Genomic_DNA"/>
</dbReference>
<dbReference type="EMBL" id="BK000554">
    <property type="status" value="NOT_ANNOTATED_CDS"/>
    <property type="molecule type" value="Genomic_DNA"/>
</dbReference>
<dbReference type="PIR" id="S07367">
    <property type="entry name" value="S07367"/>
</dbReference>
<dbReference type="InParanoid" id="P05723"/>
<dbReference type="Proteomes" id="UP000006906">
    <property type="component" value="Chloroplast"/>
</dbReference>
<dbReference type="GO" id="GO:0009507">
    <property type="term" value="C:chloroplast"/>
    <property type="evidence" value="ECO:0007669"/>
    <property type="project" value="UniProtKB-SubCell"/>
</dbReference>
<accession>P05723</accession>
<geneLocation type="chloroplast"/>
<sequence length="111" mass="12182">MICFKQQKITSLFVSLILLLTTILICWFCVLSPKVNGTNSPIEVNVYNPIPLAVMRGGIPLPGMPPVPTATPSLPRSGFTSSAKKIKESRKQKSTALQAVKDQYILRVARL</sequence>
<feature type="chain" id="PRO_0000217496" description="Uncharacterized 12.2 kDa protein in 16S rRNA region">
    <location>
        <begin position="1"/>
        <end position="111"/>
    </location>
</feature>
<feature type="region of interest" description="Disordered" evidence="1">
    <location>
        <begin position="66"/>
        <end position="94"/>
    </location>
</feature>
<feature type="compositionally biased region" description="Polar residues" evidence="1">
    <location>
        <begin position="70"/>
        <end position="83"/>
    </location>
</feature>